<sequence length="160" mass="18675">MRDEDFCCAVCLDFFVEPCIIECGHSYCRFCIESHLNINEKCPLCRAHTGNPIRNRQLESLTMSYVSSRNISTEYYERMKSYQKKLLLQNRALVIIWTELNKRPGHSTELCNLVRNVQDEELKSEIMWQVKQQVGVGLEHTGDLQEENVTIRLKNSSSQQ</sequence>
<reference key="1">
    <citation type="journal article" date="1994" name="Nature">
        <title>2.2 Mb of contiguous nucleotide sequence from chromosome III of C. elegans.</title>
        <authorList>
            <person name="Wilson R."/>
            <person name="Ainscough R."/>
            <person name="Anderson K."/>
            <person name="Baynes C."/>
            <person name="Berks M."/>
            <person name="Bonfield J."/>
            <person name="Burton J."/>
            <person name="Connell M."/>
            <person name="Copsey T."/>
            <person name="Cooper J."/>
            <person name="Coulson A."/>
            <person name="Craxton M."/>
            <person name="Dear S."/>
            <person name="Du Z."/>
            <person name="Durbin R."/>
            <person name="Favello A."/>
            <person name="Fraser A."/>
            <person name="Fulton L."/>
            <person name="Gardner A."/>
            <person name="Green P."/>
            <person name="Hawkins T."/>
            <person name="Hillier L."/>
            <person name="Jier M."/>
            <person name="Johnston L."/>
            <person name="Jones M."/>
            <person name="Kershaw J."/>
            <person name="Kirsten J."/>
            <person name="Laisster N."/>
            <person name="Latreille P."/>
            <person name="Lightning J."/>
            <person name="Lloyd C."/>
            <person name="Mortimore B."/>
            <person name="O'Callaghan M."/>
            <person name="Parsons J."/>
            <person name="Percy C."/>
            <person name="Rifken L."/>
            <person name="Roopra A."/>
            <person name="Saunders D."/>
            <person name="Shownkeen R."/>
            <person name="Sims M."/>
            <person name="Smaldon N."/>
            <person name="Smith A."/>
            <person name="Smith M."/>
            <person name="Sonnhammer E."/>
            <person name="Staden R."/>
            <person name="Sulston J."/>
            <person name="Thierry-Mieg J."/>
            <person name="Thomas K."/>
            <person name="Vaudin M."/>
            <person name="Vaughan K."/>
            <person name="Waterston R."/>
            <person name="Watson A."/>
            <person name="Weinstock L."/>
            <person name="Wilkinson-Sproat J."/>
            <person name="Wohldman P."/>
        </authorList>
    </citation>
    <scope>NUCLEOTIDE SEQUENCE [LARGE SCALE GENOMIC DNA]</scope>
    <source>
        <strain>Bristol N2</strain>
    </source>
</reference>
<reference key="2">
    <citation type="journal article" date="1998" name="Science">
        <title>Genome sequence of the nematode C. elegans: a platform for investigating biology.</title>
        <authorList>
            <consortium name="The C. elegans sequencing consortium"/>
        </authorList>
    </citation>
    <scope>NUCLEOTIDE SEQUENCE [LARGE SCALE GENOMIC DNA]</scope>
    <source>
        <strain>Bristol N2</strain>
    </source>
</reference>
<organism>
    <name type="scientific">Caenorhabditis elegans</name>
    <dbReference type="NCBI Taxonomy" id="6239"/>
    <lineage>
        <taxon>Eukaryota</taxon>
        <taxon>Metazoa</taxon>
        <taxon>Ecdysozoa</taxon>
        <taxon>Nematoda</taxon>
        <taxon>Chromadorea</taxon>
        <taxon>Rhabditida</taxon>
        <taxon>Rhabditina</taxon>
        <taxon>Rhabditomorpha</taxon>
        <taxon>Rhabditoidea</taxon>
        <taxon>Rhabditidae</taxon>
        <taxon>Peloderinae</taxon>
        <taxon>Caenorhabditis</taxon>
    </lineage>
</organism>
<keyword id="KW-0479">Metal-binding</keyword>
<keyword id="KW-1185">Reference proteome</keyword>
<keyword id="KW-0862">Zinc</keyword>
<keyword id="KW-0863">Zinc-finger</keyword>
<evidence type="ECO:0000255" key="1">
    <source>
        <dbReference type="PROSITE-ProRule" id="PRU00175"/>
    </source>
</evidence>
<feature type="chain" id="PRO_0000056325" description="Uncharacterized RING finger protein T02C1.1">
    <location>
        <begin position="1"/>
        <end position="160"/>
    </location>
</feature>
<feature type="zinc finger region" description="RING-type" evidence="1">
    <location>
        <begin position="8"/>
        <end position="46"/>
    </location>
</feature>
<gene>
    <name type="ORF">T02C1.1</name>
</gene>
<proteinExistence type="predicted"/>
<protein>
    <recommendedName>
        <fullName>Uncharacterized RING finger protein T02C1.1</fullName>
    </recommendedName>
</protein>
<accession>Q03605</accession>
<dbReference type="EMBL" id="Z19156">
    <property type="protein sequence ID" value="CAA79563.1"/>
    <property type="molecule type" value="Genomic_DNA"/>
</dbReference>
<dbReference type="PIR" id="S28290">
    <property type="entry name" value="S28290"/>
</dbReference>
<dbReference type="RefSeq" id="NP_499044.1">
    <property type="nucleotide sequence ID" value="NM_066643.5"/>
</dbReference>
<dbReference type="SMR" id="Q03605"/>
<dbReference type="BioGRID" id="41504">
    <property type="interactions" value="1"/>
</dbReference>
<dbReference type="PaxDb" id="6239-T02C1.1"/>
<dbReference type="EnsemblMetazoa" id="T02C1.1.1">
    <property type="protein sequence ID" value="T02C1.1.1"/>
    <property type="gene ID" value="WBGene00011365"/>
</dbReference>
<dbReference type="GeneID" id="176305"/>
<dbReference type="KEGG" id="cel:CELE_T02C1.1"/>
<dbReference type="UCSC" id="T02C1.1">
    <property type="organism name" value="c. elegans"/>
</dbReference>
<dbReference type="AGR" id="WB:WBGene00011365"/>
<dbReference type="CTD" id="176305"/>
<dbReference type="WormBase" id="T02C1.1">
    <property type="protein sequence ID" value="CE00312"/>
    <property type="gene ID" value="WBGene00011365"/>
</dbReference>
<dbReference type="eggNOG" id="KOG2177">
    <property type="taxonomic scope" value="Eukaryota"/>
</dbReference>
<dbReference type="GeneTree" id="ENSGT00440000033329"/>
<dbReference type="HOGENOM" id="CLU_1670893_0_0_1"/>
<dbReference type="InParanoid" id="Q03605"/>
<dbReference type="OMA" id="DEDFCCA"/>
<dbReference type="OrthoDB" id="5792560at2759"/>
<dbReference type="PhylomeDB" id="Q03605"/>
<dbReference type="CD-CODE" id="1E117272">
    <property type="entry name" value="Centrosome"/>
</dbReference>
<dbReference type="PRO" id="PR:Q03605"/>
<dbReference type="Proteomes" id="UP000001940">
    <property type="component" value="Chromosome III"/>
</dbReference>
<dbReference type="Bgee" id="WBGene00011365">
    <property type="expression patterns" value="Expressed in embryo and 3 other cell types or tissues"/>
</dbReference>
<dbReference type="GO" id="GO:0008270">
    <property type="term" value="F:zinc ion binding"/>
    <property type="evidence" value="ECO:0007669"/>
    <property type="project" value="UniProtKB-KW"/>
</dbReference>
<dbReference type="Gene3D" id="3.30.40.10">
    <property type="entry name" value="Zinc/RING finger domain, C3HC4 (zinc finger)"/>
    <property type="match status" value="1"/>
</dbReference>
<dbReference type="InterPro" id="IPR018957">
    <property type="entry name" value="Znf_C3HC4_RING-type"/>
</dbReference>
<dbReference type="InterPro" id="IPR001841">
    <property type="entry name" value="Znf_RING"/>
</dbReference>
<dbReference type="InterPro" id="IPR013083">
    <property type="entry name" value="Znf_RING/FYVE/PHD"/>
</dbReference>
<dbReference type="InterPro" id="IPR017907">
    <property type="entry name" value="Znf_RING_CS"/>
</dbReference>
<dbReference type="PANTHER" id="PTHR23327">
    <property type="entry name" value="RING FINGER PROTEIN 127"/>
    <property type="match status" value="1"/>
</dbReference>
<dbReference type="Pfam" id="PF00097">
    <property type="entry name" value="zf-C3HC4"/>
    <property type="match status" value="1"/>
</dbReference>
<dbReference type="SMART" id="SM00184">
    <property type="entry name" value="RING"/>
    <property type="match status" value="1"/>
</dbReference>
<dbReference type="SUPFAM" id="SSF57850">
    <property type="entry name" value="RING/U-box"/>
    <property type="match status" value="1"/>
</dbReference>
<dbReference type="PROSITE" id="PS00518">
    <property type="entry name" value="ZF_RING_1"/>
    <property type="match status" value="1"/>
</dbReference>
<dbReference type="PROSITE" id="PS50089">
    <property type="entry name" value="ZF_RING_2"/>
    <property type="match status" value="1"/>
</dbReference>
<name>YNN1_CAEEL</name>